<name>AROD_CLOK5</name>
<dbReference type="EC" id="4.2.1.10" evidence="1"/>
<dbReference type="EMBL" id="CP000673">
    <property type="protein sequence ID" value="EDK33049.1"/>
    <property type="molecule type" value="Genomic_DNA"/>
</dbReference>
<dbReference type="RefSeq" id="WP_012101381.1">
    <property type="nucleotide sequence ID" value="NC_009706.1"/>
</dbReference>
<dbReference type="SMR" id="A5N6W8"/>
<dbReference type="STRING" id="431943.CKL_1007"/>
<dbReference type="KEGG" id="ckl:CKL_1007"/>
<dbReference type="eggNOG" id="COG0710">
    <property type="taxonomic scope" value="Bacteria"/>
</dbReference>
<dbReference type="HOGENOM" id="CLU_064444_0_0_9"/>
<dbReference type="UniPathway" id="UPA00053">
    <property type="reaction ID" value="UER00086"/>
</dbReference>
<dbReference type="Proteomes" id="UP000002411">
    <property type="component" value="Chromosome"/>
</dbReference>
<dbReference type="GO" id="GO:0003855">
    <property type="term" value="F:3-dehydroquinate dehydratase activity"/>
    <property type="evidence" value="ECO:0007669"/>
    <property type="project" value="UniProtKB-UniRule"/>
</dbReference>
<dbReference type="GO" id="GO:0046279">
    <property type="term" value="P:3,4-dihydroxybenzoate biosynthetic process"/>
    <property type="evidence" value="ECO:0007669"/>
    <property type="project" value="UniProtKB-ARBA"/>
</dbReference>
<dbReference type="GO" id="GO:0008652">
    <property type="term" value="P:amino acid biosynthetic process"/>
    <property type="evidence" value="ECO:0007669"/>
    <property type="project" value="UniProtKB-KW"/>
</dbReference>
<dbReference type="GO" id="GO:0009073">
    <property type="term" value="P:aromatic amino acid family biosynthetic process"/>
    <property type="evidence" value="ECO:0007669"/>
    <property type="project" value="UniProtKB-KW"/>
</dbReference>
<dbReference type="GO" id="GO:0009423">
    <property type="term" value="P:chorismate biosynthetic process"/>
    <property type="evidence" value="ECO:0007669"/>
    <property type="project" value="UniProtKB-UniRule"/>
</dbReference>
<dbReference type="CDD" id="cd00502">
    <property type="entry name" value="DHQase_I"/>
    <property type="match status" value="1"/>
</dbReference>
<dbReference type="FunFam" id="3.20.20.70:FF:000047">
    <property type="entry name" value="3-dehydroquinate dehydratase"/>
    <property type="match status" value="1"/>
</dbReference>
<dbReference type="Gene3D" id="3.20.20.70">
    <property type="entry name" value="Aldolase class I"/>
    <property type="match status" value="1"/>
</dbReference>
<dbReference type="HAMAP" id="MF_00214">
    <property type="entry name" value="AroD"/>
    <property type="match status" value="1"/>
</dbReference>
<dbReference type="InterPro" id="IPR013785">
    <property type="entry name" value="Aldolase_TIM"/>
</dbReference>
<dbReference type="InterPro" id="IPR001381">
    <property type="entry name" value="DHquinase_I"/>
</dbReference>
<dbReference type="InterPro" id="IPR050146">
    <property type="entry name" value="Type-I_3-dehydroquinase"/>
</dbReference>
<dbReference type="NCBIfam" id="TIGR01093">
    <property type="entry name" value="aroD"/>
    <property type="match status" value="1"/>
</dbReference>
<dbReference type="PANTHER" id="PTHR43699">
    <property type="entry name" value="3-DEHYDROQUINATE DEHYDRATASE"/>
    <property type="match status" value="1"/>
</dbReference>
<dbReference type="PANTHER" id="PTHR43699:SF1">
    <property type="entry name" value="3-DEHYDROQUINATE DEHYDRATASE"/>
    <property type="match status" value="1"/>
</dbReference>
<dbReference type="Pfam" id="PF01487">
    <property type="entry name" value="DHquinase_I"/>
    <property type="match status" value="1"/>
</dbReference>
<dbReference type="SUPFAM" id="SSF51569">
    <property type="entry name" value="Aldolase"/>
    <property type="match status" value="1"/>
</dbReference>
<accession>A5N6W8</accession>
<reference key="1">
    <citation type="journal article" date="2008" name="Proc. Natl. Acad. Sci. U.S.A.">
        <title>The genome of Clostridium kluyveri, a strict anaerobe with unique metabolic features.</title>
        <authorList>
            <person name="Seedorf H."/>
            <person name="Fricke W.F."/>
            <person name="Veith B."/>
            <person name="Brueggemann H."/>
            <person name="Liesegang H."/>
            <person name="Strittmatter A."/>
            <person name="Miethke M."/>
            <person name="Buckel W."/>
            <person name="Hinderberger J."/>
            <person name="Li F."/>
            <person name="Hagemeier C."/>
            <person name="Thauer R.K."/>
            <person name="Gottschalk G."/>
        </authorList>
    </citation>
    <scope>NUCLEOTIDE SEQUENCE [LARGE SCALE GENOMIC DNA]</scope>
    <source>
        <strain>ATCC 8527 / DSM 555 / NBRC 12016 / NCIMB 10680 / K1</strain>
    </source>
</reference>
<organism>
    <name type="scientific">Clostridium kluyveri (strain ATCC 8527 / DSM 555 / NBRC 12016 / NCIMB 10680 / K1)</name>
    <dbReference type="NCBI Taxonomy" id="431943"/>
    <lineage>
        <taxon>Bacteria</taxon>
        <taxon>Bacillati</taxon>
        <taxon>Bacillota</taxon>
        <taxon>Clostridia</taxon>
        <taxon>Eubacteriales</taxon>
        <taxon>Clostridiaceae</taxon>
        <taxon>Clostridium</taxon>
    </lineage>
</organism>
<protein>
    <recommendedName>
        <fullName evidence="1">3-dehydroquinate dehydratase</fullName>
        <shortName evidence="1">3-dehydroquinase</shortName>
        <ecNumber evidence="1">4.2.1.10</ecNumber>
    </recommendedName>
    <alternativeName>
        <fullName evidence="1">Type I DHQase</fullName>
    </alternativeName>
    <alternativeName>
        <fullName evidence="1">Type I dehydroquinase</fullName>
        <shortName evidence="1">DHQ1</shortName>
    </alternativeName>
</protein>
<sequence length="255" mass="28536">MGSIVKIRDVKLGEGIPKIAVPLVGSNEEEIMEEIAGVKTTKLDIVEWRIDYYKYVEEVEKVKKLLQKMRKNLNNIPILVTFRTAKEGGKREISLEYYIELNKAIAATGNTDMIDIELFAAEDEAVKKIVEELHEYNIKVIMSNHDFHKTPHKDELISRMCRMQQLGADIAKIAVMPCSTKDVLELLSATCEMKCKHNDTPIITMSMGTLGVITRLAGETFGSALTFGSAKAASAPGQLEVNELYKVLKLISAYR</sequence>
<comment type="function">
    <text evidence="1">Involved in the third step of the chorismate pathway, which leads to the biosynthesis of aromatic amino acids. Catalyzes the cis-dehydration of 3-dehydroquinate (DHQ) and introduces the first double bond of the aromatic ring to yield 3-dehydroshikimate.</text>
</comment>
<comment type="catalytic activity">
    <reaction evidence="1">
        <text>3-dehydroquinate = 3-dehydroshikimate + H2O</text>
        <dbReference type="Rhea" id="RHEA:21096"/>
        <dbReference type="ChEBI" id="CHEBI:15377"/>
        <dbReference type="ChEBI" id="CHEBI:16630"/>
        <dbReference type="ChEBI" id="CHEBI:32364"/>
        <dbReference type="EC" id="4.2.1.10"/>
    </reaction>
</comment>
<comment type="pathway">
    <text evidence="1">Metabolic intermediate biosynthesis; chorismate biosynthesis; chorismate from D-erythrose 4-phosphate and phosphoenolpyruvate: step 3/7.</text>
</comment>
<comment type="subunit">
    <text evidence="1">Homodimer.</text>
</comment>
<comment type="similarity">
    <text evidence="1">Belongs to the type-I 3-dehydroquinase family.</text>
</comment>
<evidence type="ECO:0000255" key="1">
    <source>
        <dbReference type="HAMAP-Rule" id="MF_00214"/>
    </source>
</evidence>
<proteinExistence type="inferred from homology"/>
<keyword id="KW-0028">Amino-acid biosynthesis</keyword>
<keyword id="KW-0057">Aromatic amino acid biosynthesis</keyword>
<keyword id="KW-0456">Lyase</keyword>
<keyword id="KW-1185">Reference proteome</keyword>
<keyword id="KW-0704">Schiff base</keyword>
<feature type="chain" id="PRO_1000078042" description="3-dehydroquinate dehydratase">
    <location>
        <begin position="1"/>
        <end position="255"/>
    </location>
</feature>
<feature type="active site" description="Proton donor/acceptor" evidence="1">
    <location>
        <position position="145"/>
    </location>
</feature>
<feature type="active site" description="Schiff-base intermediate with substrate" evidence="1">
    <location>
        <position position="172"/>
    </location>
</feature>
<feature type="binding site" evidence="1">
    <location>
        <begin position="47"/>
        <end position="49"/>
    </location>
    <ligand>
        <name>3-dehydroquinate</name>
        <dbReference type="ChEBI" id="CHEBI:32364"/>
    </ligand>
</feature>
<feature type="binding site" evidence="1">
    <location>
        <position position="83"/>
    </location>
    <ligand>
        <name>3-dehydroquinate</name>
        <dbReference type="ChEBI" id="CHEBI:32364"/>
    </ligand>
</feature>
<feature type="binding site" evidence="1">
    <location>
        <position position="215"/>
    </location>
    <ligand>
        <name>3-dehydroquinate</name>
        <dbReference type="ChEBI" id="CHEBI:32364"/>
    </ligand>
</feature>
<feature type="binding site" evidence="1">
    <location>
        <position position="234"/>
    </location>
    <ligand>
        <name>3-dehydroquinate</name>
        <dbReference type="ChEBI" id="CHEBI:32364"/>
    </ligand>
</feature>
<feature type="binding site" evidence="1">
    <location>
        <position position="238"/>
    </location>
    <ligand>
        <name>3-dehydroquinate</name>
        <dbReference type="ChEBI" id="CHEBI:32364"/>
    </ligand>
</feature>
<gene>
    <name evidence="1" type="primary">aroD</name>
    <name type="ordered locus">CKL_1007</name>
</gene>